<organism>
    <name type="scientific">Solanum lycopersicum</name>
    <name type="common">Tomato</name>
    <name type="synonym">Lycopersicon esculentum</name>
    <dbReference type="NCBI Taxonomy" id="4081"/>
    <lineage>
        <taxon>Eukaryota</taxon>
        <taxon>Viridiplantae</taxon>
        <taxon>Streptophyta</taxon>
        <taxon>Embryophyta</taxon>
        <taxon>Tracheophyta</taxon>
        <taxon>Spermatophyta</taxon>
        <taxon>Magnoliopsida</taxon>
        <taxon>eudicotyledons</taxon>
        <taxon>Gunneridae</taxon>
        <taxon>Pentapetalae</taxon>
        <taxon>asterids</taxon>
        <taxon>lamiids</taxon>
        <taxon>Solanales</taxon>
        <taxon>Solanaceae</taxon>
        <taxon>Solanoideae</taxon>
        <taxon>Solaneae</taxon>
        <taxon>Solanum</taxon>
        <taxon>Solanum subgen. Lycopersicon</taxon>
    </lineage>
</organism>
<evidence type="ECO:0000250" key="1">
    <source>
        <dbReference type="UniProtKB" id="C6ZJZ3"/>
    </source>
</evidence>
<evidence type="ECO:0000250" key="2">
    <source>
        <dbReference type="UniProtKB" id="P29557"/>
    </source>
</evidence>
<evidence type="ECO:0000250" key="3">
    <source>
        <dbReference type="UniProtKB" id="Q00LS8"/>
    </source>
</evidence>
<evidence type="ECO:0000269" key="4">
    <source>
    </source>
</evidence>
<evidence type="ECO:0000269" key="5">
    <source>
    </source>
</evidence>
<evidence type="ECO:0000269" key="6">
    <source>
    </source>
</evidence>
<evidence type="ECO:0000269" key="7">
    <source>
    </source>
</evidence>
<evidence type="ECO:0000269" key="8">
    <source>
    </source>
</evidence>
<evidence type="ECO:0000269" key="9">
    <source>
    </source>
</evidence>
<evidence type="ECO:0000303" key="10">
    <source>
    </source>
</evidence>
<evidence type="ECO:0000303" key="11">
    <source>
    </source>
</evidence>
<evidence type="ECO:0000303" key="12">
    <source>
    </source>
</evidence>
<evidence type="ECO:0000305" key="13"/>
<reference key="1">
    <citation type="journal article" date="2000" name="Virology">
        <title>Strain-specific interaction of the tobacco etch virus NIa protein with the translation initiation factor eIF4E in the yeast two-hybrid system.</title>
        <authorList>
            <person name="Schaad M.C."/>
            <person name="Anderberg R.J."/>
            <person name="Carrington J.C."/>
        </authorList>
    </citation>
    <scope>NUCLEOTIDE SEQUENCE [MRNA]</scope>
    <source>
        <strain>cv. VF36</strain>
    </source>
</reference>
<reference key="2">
    <citation type="submission" date="2004-08" db="EMBL/GenBank/DDBJ databases">
        <title>Amino acid polymorphism in the eukaryotic translation initiation factor 4E determines resistance against several potyviruses in tomato and pepper.</title>
        <authorList>
            <person name="Ruffel S."/>
            <person name="Moretti A."/>
            <person name="Palloix A."/>
            <person name="Lesage M.-L."/>
            <person name="Caranta C."/>
        </authorList>
    </citation>
    <scope>NUCLEOTIDE SEQUENCE [MRNA]</scope>
    <source>
        <strain>cv. MicroTom</strain>
    </source>
</reference>
<reference key="3">
    <citation type="journal article" date="2005" name="Mol. Genet. Genomics">
        <title>The recessive potyvirus resistance gene pot-1 is the tomato orthologue of the pepper pvr2-eIF4E gene.</title>
        <authorList>
            <person name="Ruffel S."/>
            <person name="Gallois J.L."/>
            <person name="Lesage M.L."/>
            <person name="Caranta C."/>
        </authorList>
    </citation>
    <scope>NUCLEOTIDE SEQUENCE [MRNA]</scope>
    <scope>FUNCTION</scope>
    <scope>FUNCTION (MICROBIAL INFECTION)</scope>
    <source>
        <strain>cv. Mospomorist</strain>
    </source>
</reference>
<reference key="4">
    <citation type="submission" date="2006-05" db="EMBL/GenBank/DDBJ databases">
        <authorList>
            <person name="Zhang Y."/>
            <person name="Li H."/>
            <person name="Ye Z."/>
        </authorList>
    </citation>
    <scope>NUCLEOTIDE SEQUENCE [MRNA]</scope>
    <source>
        <strain>cv. Zhongshu No5</strain>
    </source>
</reference>
<reference key="5">
    <citation type="journal article" date="2010" name="PLoS ONE">
        <title>An induced mutation in tomato eIF4E leads to immunity to two potyviruses.</title>
        <authorList>
            <person name="Piron F."/>
            <person name="Nicolai M."/>
            <person name="Minoia S."/>
            <person name="Piednoir E."/>
            <person name="Moretti A."/>
            <person name="Salgues A."/>
            <person name="Zamir D."/>
            <person name="Caranta C."/>
            <person name="Bendahmane A."/>
        </authorList>
    </citation>
    <scope>NUCLEOTIDE SEQUENCE [GENOMIC DNA]</scope>
    <scope>FUNCTION</scope>
    <scope>FUNCTION (MICROBIAL INFECTION)</scope>
    <source>
        <strain>cv. M82</strain>
    </source>
</reference>
<reference key="6">
    <citation type="journal article" date="2016" name="J. Gen. Virol.">
        <title>A new eIF4E1 allele characterized by RNAseq data mining is associated with resistance to potato virus Y in tomato albeit with a low durability.</title>
        <authorList>
            <person name="Lebaron C."/>
            <person name="Rosado A."/>
            <person name="Sauvage C."/>
            <person name="Gauffier C."/>
            <person name="German-Retana S."/>
            <person name="Moury B."/>
            <person name="Gallois J.-L."/>
        </authorList>
    </citation>
    <scope>NUCLEOTIDE SEQUENCE [MRNA]</scope>
    <scope>FUNCTION</scope>
    <scope>FUNCTION (MICROBIAL INFECTION)</scope>
    <scope>DISRUPTION PHENOTYPE</scope>
    <scope>VARIANTS LYS-54; VAL-58; GLY-112 AND MET-151</scope>
    <scope>POLYMORPHISM</scope>
    <source>
        <strain>cv. M82</strain>
    </source>
</reference>
<reference key="7">
    <citation type="journal article" date="2012" name="Nature">
        <title>The tomato genome sequence provides insights into fleshy fruit evolution.</title>
        <authorList>
            <consortium name="Tomato Genome Consortium"/>
        </authorList>
    </citation>
    <scope>NUCLEOTIDE SEQUENCE [LARGE SCALE GENOMIC DNA]</scope>
    <source>
        <strain>cv. Heinz 1706</strain>
    </source>
</reference>
<reference key="8">
    <citation type="journal article" date="2011" name="PLoS ONE">
        <title>Knock-down of both eIF4E1 and eIF4E2 genes confers broad-spectrum resistance against potyviruses in tomato.</title>
        <authorList>
            <person name="Mazier M."/>
            <person name="Flamain F."/>
            <person name="Nicolai M."/>
            <person name="Sarnette V."/>
            <person name="Caranta C."/>
        </authorList>
    </citation>
    <scope>FUNCTION</scope>
    <scope>FUNCTION (MICROBIAL INFECTION)</scope>
    <scope>DISRUPTION PHENOTYPE</scope>
    <scope>INTERACTION WITH POTYVIRUS VPG (MICROBIAL INFECTION)</scope>
    <source>
        <strain>cv. WVA106</strain>
    </source>
</reference>
<reference key="9">
    <citation type="journal article" date="2014" name="Infect. Genet. Evol.">
        <title>Evolution of plant eukaryotic initiation factor 4E (eIF4E) and potyvirus genome-linked protein (VPg): a game of mirrors impacting resistance spectrum and durability.</title>
        <authorList>
            <person name="Moury B."/>
            <person name="Charron C."/>
            <person name="Janzac B."/>
            <person name="Simon V."/>
            <person name="Gallois J.L."/>
            <person name="Palloix A."/>
            <person name="Caranta C."/>
        </authorList>
    </citation>
    <scope>GENE FAMILY</scope>
    <scope>REVIEW</scope>
</reference>
<reference key="10">
    <citation type="journal article" date="2016" name="Plant J.">
        <title>A TILLING approach to generate broad-spectrum resistance to potyviruses in tomato is hampered by eIF4E gene redundancy.</title>
        <authorList>
            <person name="Gauffier C."/>
            <person name="Lebaron C."/>
            <person name="Moretti A."/>
            <person name="Constant C."/>
            <person name="Moquet F."/>
            <person name="Bonnet G."/>
            <person name="Caranta C."/>
            <person name="Gallois J.-L."/>
        </authorList>
    </citation>
    <scope>FUNCTION</scope>
    <scope>FUNCTION (MICROBIAL INFECTION)</scope>
    <scope>DISRUPTION PHENOTYPE</scope>
    <scope>VARIANTS PHE-48; LYS-68; SER-69; ASP-77; LEU-85; ILE-109; GLN-123 AND SER-224</scope>
    <scope>POLYMORPHISM</scope>
    <source>
        <strain>cv. M82</strain>
    </source>
</reference>
<reference key="11">
    <citation type="journal article" date="2020" name="Front. Plant Sci.">
        <title>Genome editing of eIF4E1 in tomato confers resistance to pepper mottle virus.</title>
        <authorList>
            <person name="Yoon Y.-J."/>
            <person name="Venkatesh J."/>
            <person name="Lee J.-H."/>
            <person name="Kim J."/>
            <person name="Lee H.-E."/>
            <person name="Kim D.-S."/>
            <person name="Kang B.-C."/>
        </authorList>
    </citation>
    <scope>FUNCTION</scope>
    <scope>FUNCTION (MICROBIAL INFECTION)</scope>
    <source>
        <strain>cv. MicroTom</strain>
    </source>
</reference>
<dbReference type="EMBL" id="AF259801">
    <property type="protein sequence ID" value="AAF70507.1"/>
    <property type="molecule type" value="mRNA"/>
</dbReference>
<dbReference type="EMBL" id="AY723734">
    <property type="protein sequence ID" value="AAV88611.1"/>
    <property type="molecule type" value="mRNA"/>
</dbReference>
<dbReference type="EMBL" id="AY723733">
    <property type="protein sequence ID" value="AAV88610.1"/>
    <property type="molecule type" value="mRNA"/>
</dbReference>
<dbReference type="EMBL" id="DQ537341">
    <property type="protein sequence ID" value="ABF83562.1"/>
    <property type="molecule type" value="mRNA"/>
</dbReference>
<dbReference type="EMBL" id="DQ537342">
    <property type="protein sequence ID" value="ABF83563.1"/>
    <property type="molecule type" value="mRNA"/>
</dbReference>
<dbReference type="EMBL" id="DQ537343">
    <property type="protein sequence ID" value="ABF83564.1"/>
    <property type="molecule type" value="mRNA"/>
</dbReference>
<dbReference type="EMBL" id="KX855953">
    <property type="protein sequence ID" value="AOT21124.1"/>
    <property type="molecule type" value="mRNA"/>
</dbReference>
<dbReference type="EMBL" id="GQ451830">
    <property type="protein sequence ID" value="ACV74551.1"/>
    <property type="molecule type" value="Genomic_DNA"/>
</dbReference>
<dbReference type="RefSeq" id="NP_001234459.2">
    <property type="nucleotide sequence ID" value="NM_001247530.2"/>
</dbReference>
<dbReference type="SMR" id="Q4VQY3"/>
<dbReference type="FunCoup" id="Q4VQY3">
    <property type="interactions" value="2893"/>
</dbReference>
<dbReference type="STRING" id="4081.Q4VQY3"/>
<dbReference type="PaxDb" id="4081-Solyc03g005870.2.1"/>
<dbReference type="EnsemblPlants" id="Solyc03g005870.3.1">
    <property type="protein sequence ID" value="Solyc03g005870.3.1"/>
    <property type="gene ID" value="Solyc03g005870.3"/>
</dbReference>
<dbReference type="GeneID" id="543653"/>
<dbReference type="Gramene" id="Solyc03g005870.3.1">
    <property type="protein sequence ID" value="Solyc03g005870.3.1"/>
    <property type="gene ID" value="Solyc03g005870.3"/>
</dbReference>
<dbReference type="KEGG" id="sly:543653"/>
<dbReference type="eggNOG" id="KOG1670">
    <property type="taxonomic scope" value="Eukaryota"/>
</dbReference>
<dbReference type="HOGENOM" id="CLU_043552_2_1_1"/>
<dbReference type="InParanoid" id="Q4VQY3"/>
<dbReference type="OMA" id="KWIINCL"/>
<dbReference type="OrthoDB" id="590761at2759"/>
<dbReference type="PhylomeDB" id="Q4VQY3"/>
<dbReference type="Proteomes" id="UP000004994">
    <property type="component" value="Chromosome 3"/>
</dbReference>
<dbReference type="ExpressionAtlas" id="Q4VQY3">
    <property type="expression patterns" value="baseline and differential"/>
</dbReference>
<dbReference type="GO" id="GO:0005737">
    <property type="term" value="C:cytoplasm"/>
    <property type="evidence" value="ECO:0000250"/>
    <property type="project" value="UniProtKB"/>
</dbReference>
<dbReference type="GO" id="GO:0016281">
    <property type="term" value="C:eukaryotic translation initiation factor 4F complex"/>
    <property type="evidence" value="ECO:0000318"/>
    <property type="project" value="GO_Central"/>
</dbReference>
<dbReference type="GO" id="GO:0005634">
    <property type="term" value="C:nucleus"/>
    <property type="evidence" value="ECO:0000250"/>
    <property type="project" value="UniProtKB"/>
</dbReference>
<dbReference type="GO" id="GO:0000340">
    <property type="term" value="F:RNA 7-methylguanosine cap binding"/>
    <property type="evidence" value="ECO:0000318"/>
    <property type="project" value="GO_Central"/>
</dbReference>
<dbReference type="GO" id="GO:0003743">
    <property type="term" value="F:translation initiation factor activity"/>
    <property type="evidence" value="ECO:0000318"/>
    <property type="project" value="GO_Central"/>
</dbReference>
<dbReference type="GO" id="GO:0051607">
    <property type="term" value="P:defense response to virus"/>
    <property type="evidence" value="ECO:0000250"/>
    <property type="project" value="UniProtKB"/>
</dbReference>
<dbReference type="GO" id="GO:0006417">
    <property type="term" value="P:regulation of translation"/>
    <property type="evidence" value="ECO:0007669"/>
    <property type="project" value="UniProtKB-KW"/>
</dbReference>
<dbReference type="GO" id="GO:0006413">
    <property type="term" value="P:translational initiation"/>
    <property type="evidence" value="ECO:0000318"/>
    <property type="project" value="GO_Central"/>
</dbReference>
<dbReference type="FunFam" id="3.30.760.10:FF:000003">
    <property type="entry name" value="Eukaryotic translation initiation factor 4E"/>
    <property type="match status" value="1"/>
</dbReference>
<dbReference type="Gene3D" id="3.30.760.10">
    <property type="entry name" value="RNA Cap, Translation Initiation Factor Eif4e"/>
    <property type="match status" value="1"/>
</dbReference>
<dbReference type="InterPro" id="IPR023398">
    <property type="entry name" value="TIF_eIF4e-like"/>
</dbReference>
<dbReference type="InterPro" id="IPR001040">
    <property type="entry name" value="TIF_eIF_4E"/>
</dbReference>
<dbReference type="PANTHER" id="PTHR11960">
    <property type="entry name" value="EUKARYOTIC TRANSLATION INITIATION FACTOR 4E RELATED"/>
    <property type="match status" value="1"/>
</dbReference>
<dbReference type="PANTHER" id="PTHR11960:SF43">
    <property type="entry name" value="EUKARYOTIC TRANSLATION INITIATION FACTOR 4E-1"/>
    <property type="match status" value="1"/>
</dbReference>
<dbReference type="Pfam" id="PF01652">
    <property type="entry name" value="IF4E"/>
    <property type="match status" value="1"/>
</dbReference>
<dbReference type="SUPFAM" id="SSF55418">
    <property type="entry name" value="eIF4e-like"/>
    <property type="match status" value="1"/>
</dbReference>
<accession>Q4VQY3</accession>
<accession>A0A1D8EJF6</accession>
<accession>Q199B8</accession>
<accession>Q199B9</accession>
<accession>Q199C0</accession>
<accession>Q4VQY2</accession>
<accession>Q9M4R8</accession>
<feature type="chain" id="PRO_0000454060" description="Eukaryotic translation initiation factor 4E-1">
    <location>
        <begin position="1"/>
        <end position="231"/>
    </location>
</feature>
<feature type="region of interest" description="EIF4G-binding" evidence="3">
    <location>
        <begin position="56"/>
        <end position="59"/>
    </location>
</feature>
<feature type="region of interest" description="EIF4G-binding" evidence="3">
    <location>
        <begin position="66"/>
        <end position="102"/>
    </location>
</feature>
<feature type="region of interest" description="EIF4G-binding" evidence="3">
    <location>
        <begin position="150"/>
        <end position="159"/>
    </location>
</feature>
<feature type="binding site" evidence="2">
    <location>
        <begin position="74"/>
        <end position="79"/>
    </location>
    <ligand>
        <name>mRNA</name>
        <dbReference type="ChEBI" id="CHEBI:33699"/>
    </ligand>
    <ligandPart>
        <name>N(7)-methylguanosine 5'-triphosphate group</name>
        <dbReference type="ChEBI" id="CHEBI:74429"/>
        <note>m7GTP residue in mRNA cap</note>
    </ligandPart>
</feature>
<feature type="binding site" evidence="2">
    <location>
        <position position="106"/>
    </location>
    <ligand>
        <name>mRNA</name>
        <dbReference type="ChEBI" id="CHEBI:33699"/>
    </ligand>
    <ligandPart>
        <name>N(7)-methylguanosine 5'-triphosphate group</name>
        <dbReference type="ChEBI" id="CHEBI:74429"/>
        <note>m7GTP residue in mRNA cap</note>
    </ligandPart>
</feature>
<feature type="binding site" evidence="2">
    <location>
        <begin position="124"/>
        <end position="125"/>
    </location>
    <ligand>
        <name>mRNA</name>
        <dbReference type="ChEBI" id="CHEBI:33699"/>
    </ligand>
    <ligandPart>
        <name>N(7)-methylguanosine 5'-triphosphate group</name>
        <dbReference type="ChEBI" id="CHEBI:74429"/>
        <note>m7GTP residue in mRNA cap</note>
    </ligandPart>
</feature>
<feature type="binding site" evidence="2">
    <location>
        <begin position="174"/>
        <end position="179"/>
    </location>
    <ligand>
        <name>mRNA</name>
        <dbReference type="ChEBI" id="CHEBI:33699"/>
    </ligand>
    <ligandPart>
        <name>N(7)-methylguanosine 5'-triphosphate group</name>
        <dbReference type="ChEBI" id="CHEBI:74429"/>
        <note>m7GTP residue in mRNA cap</note>
    </ligandPart>
</feature>
<feature type="binding site" evidence="3">
    <location>
        <begin position="219"/>
        <end position="223"/>
    </location>
    <ligand>
        <name>mRNA</name>
        <dbReference type="ChEBI" id="CHEBI:33699"/>
    </ligand>
    <ligandPart>
        <name>N(7)-methylguanosine 5'-triphosphate group</name>
        <dbReference type="ChEBI" id="CHEBI:74429"/>
        <note>m7GTP residue in mRNA cap</note>
    </ligandPart>
</feature>
<feature type="disulfide bond" evidence="2">
    <location>
        <begin position="129"/>
        <end position="167"/>
    </location>
</feature>
<feature type="sequence variant" description="In allele pot-1." evidence="7">
    <original>L</original>
    <variation>F</variation>
    <location>
        <position position="48"/>
    </location>
</feature>
<feature type="sequence variant" description="In allele pot1(2), haplotypes 1 and 4." evidence="8">
    <original>V</original>
    <variation>K</variation>
    <location>
        <position position="54"/>
    </location>
</feature>
<feature type="sequence variant" description="In haplotype 2." evidence="8">
    <original>L</original>
    <variation>V</variation>
    <location>
        <position position="58"/>
    </location>
</feature>
<feature type="sequence variant" description="In allele pot-1." evidence="7">
    <original>N</original>
    <variation>K</variation>
    <location>
        <position position="68"/>
    </location>
</feature>
<feature type="sequence variant" description="In allele pot-1." evidence="7">
    <original>P</original>
    <variation>S</variation>
    <location>
        <position position="69"/>
    </location>
</feature>
<feature type="sequence variant" description="In allele pot-1." evidence="7">
    <original>A</original>
    <variation>D</variation>
    <location>
        <position position="77"/>
    </location>
</feature>
<feature type="sequence variant" description="In allele pot-1." evidence="7">
    <original>V</original>
    <variation>L</variation>
    <location>
        <position position="85"/>
    </location>
</feature>
<feature type="sequence variant" description="In allele pot-1." evidence="7">
    <original>M</original>
    <variation>I</variation>
    <location>
        <position position="109"/>
    </location>
</feature>
<feature type="sequence variant" description="In allele pot1(2), haplotype 4." evidence="8">
    <original>D</original>
    <variation>G</variation>
    <location>
        <position position="112"/>
    </location>
</feature>
<feature type="sequence variant" description="In allele pot-1." evidence="7">
    <original>K</original>
    <variation>Q</variation>
    <location>
        <position position="123"/>
    </location>
</feature>
<feature type="sequence variant" description="In haplotype 3." evidence="8">
    <original>T</original>
    <variation>M</variation>
    <location>
        <position position="151"/>
    </location>
</feature>
<feature type="sequence variant" description="In allele pot-1." evidence="7">
    <original>N</original>
    <variation>S</variation>
    <location>
        <position position="224"/>
    </location>
</feature>
<feature type="sequence conflict" description="In Ref. 4; ABF83563." evidence="13" ref="4">
    <original>D</original>
    <variation>N</variation>
    <location>
        <position position="13"/>
    </location>
</feature>
<feature type="sequence conflict" description="In Ref. 4; ABF83562." evidence="13" ref="4">
    <original>E</original>
    <variation>G</variation>
    <location>
        <position position="16"/>
    </location>
</feature>
<feature type="sequence conflict" description="In Ref. 4; ABF83564." evidence="13" ref="4">
    <original>G</original>
    <variation>E</variation>
    <location>
        <position position="26"/>
    </location>
</feature>
<feature type="sequence conflict" description="In Ref. 1; AAF70507." evidence="13" ref="1">
    <original>D</original>
    <variation>N</variation>
    <location>
        <position position="93"/>
    </location>
</feature>
<feature type="sequence conflict" description="In Ref. 2; AAV88611." evidence="13" ref="2">
    <original>D</original>
    <variation>N</variation>
    <location>
        <position position="112"/>
    </location>
</feature>
<protein>
    <recommendedName>
        <fullName evidence="10">Eukaryotic translation initiation factor 4E-1</fullName>
        <shortName evidence="10 11">eIF4E-1</shortName>
    </recommendedName>
    <alternativeName>
        <fullName evidence="13">eIF-4F 25 kDa subunit</fullName>
    </alternativeName>
    <alternativeName>
        <fullName evidence="13">eIF-4F p26 subunit</fullName>
    </alternativeName>
    <alternativeName>
        <fullName evidence="13">mRNA cap-binding protein</fullName>
    </alternativeName>
</protein>
<keyword id="KW-0963">Cytoplasm</keyword>
<keyword id="KW-1015">Disulfide bond</keyword>
<keyword id="KW-0945">Host-virus interaction</keyword>
<keyword id="KW-0396">Initiation factor</keyword>
<keyword id="KW-0539">Nucleus</keyword>
<keyword id="KW-0611">Plant defense</keyword>
<keyword id="KW-0648">Protein biosynthesis</keyword>
<keyword id="KW-1185">Reference proteome</keyword>
<keyword id="KW-0694">RNA-binding</keyword>
<keyword id="KW-0810">Translation regulation</keyword>
<gene>
    <name evidence="10 11 12" type="primary">eIF4E1</name>
    <name evidence="10" type="synonym">POT-1</name>
    <name evidence="13" type="ordered locus">Solyc03g005870</name>
</gene>
<sequence>MAAAEMERTMSFDAAEKLKAADGGGGEVDDELEEGEIVEESNDTASYLGKEITVKHPLEHSWTFWFDNPTTKSRQTAWGSSLRNVYTFSTVEDFWGAYNNIHHPSKLIMGADFHCFKHKIEPKWEDPVCANGGTWKMSFSKGKSDTSWLYTLLAMIGHQFDHGDEICGAVVSVRAKGEKIALWTKNAANETAQVSIGKQWKQFLDYSDSVGFIFHDDAKRLDRNAKNRYTV</sequence>
<name>IF4E1_SOLLC</name>
<comment type="function">
    <text evidence="4 5 6 7 8 9">Component of the protein complex eIF4F, which is involved in the recognition of the mRNA cap, ATP-dependent unwinding of 5'-terminal secondary structure and recruitment of mRNA to the ribosome (PubMed:20593023, PubMed:26850324). Recognizes and binds the 7-methylguanosine-containing mRNA cap during an early step in the initiation of protein synthesis and facilitates ribosome binding by inducing the unwinding of the mRNAs secondary structures (PubMed:26850324). Key component of recessive resistance to potyviruses (PubMed:15971038, PubMed:20593023, PubMed:22242134, PubMed:26850324, PubMed:27655175, PubMed:32849681).</text>
</comment>
<comment type="function">
    <text evidence="4 5 6 7 8 9">(Microbial infection) Susceptibility host factor required for viral infection (e.g. potato virus Y (PVY), pepper mottle virus (PepMoV) and tobacco etch virus (TEV)) by recruiting viral RNAs to the host ribosomal complex via an interaction with viral genome-linked protein (VPg).</text>
</comment>
<comment type="subunit">
    <text evidence="2">EIF4F is a multi-subunit complex, the composition of which varies with external and internal environmental conditions (By similarity). It is composed of at least EIF4A, EIF4E and EIF4G. EIF4E is also known to interact with other partners (By similarity). In higher plants two isoforms of EIF4F have been identified, named isoform EIF4F and isoform EIF(iso)4F (By similarity). Isoform EIF4F has subunits p220 and p26, whereas isoform EIF(iso)4F has subunits p82 and p28 (By similarity).</text>
</comment>
<comment type="subunit">
    <text evidence="6">(Microbial infection) Interacts with potyvirus viral genome-linked protein (VPg); mostly with tobacco etch virus (TEV-HAT) VPg and, to a lower extent, with potato virus Y (PVY-LYE84 and PVY-LYE90) and pepper mottle virus (PepMoV) VPg.</text>
</comment>
<comment type="subcellular location">
    <subcellularLocation>
        <location evidence="1">Nucleus</location>
    </subcellularLocation>
    <subcellularLocation>
        <location evidence="1">Cytoplasm</location>
    </subcellularLocation>
</comment>
<comment type="PTM">
    <text evidence="2">According to the redox status, the Cys-129-Cys-167 disulfide bridge may have a role in regulating protein function by affecting its ability to bind capped mRNA.</text>
</comment>
<comment type="polymorphism">
    <text evidence="8">Variant present in the allele pot1(2), haplotypes 1 and 4, is associated with an increased resistance to potato virus Y (PVY) isolate N605.</text>
</comment>
<comment type="polymorphism">
    <text evidence="7">Variant present in the allele pot-1 is associated with a functional mRNA capping activity and normal susceptibility to potyviruses (e.g. pepper mottle virus (PepMoV), potato virus Y (PVY) and tobacco etch virus (TEV)).</text>
</comment>
<comment type="disruption phenotype">
    <text evidence="6 7 8">Impaired mRNA capping activity (PubMed:26850324). Slightly impaired growth and fertility (PubMed:22242134). Increased resistance to pepper mottle virus (PepMoV) and potato virus Y (PVY) strain LYE90 but not to PVY strains N605, LYE72, SON41 and LYE84 and to tobacco etch virus (TEV) strains HAT, CAA10 and S103 (PubMed:26850324). Plants lacking both eIF4E1 and eIF4E2 display pleiotropic effect on plant development but are resistant specifically to several potyviruses including potato virus Y (PVY, strains N605, LYE72, LYE90 and LYE84), tobacco etch virus (TEV, strains HAT, CAA10 and S103), pepper mottle virus (PepMoV), Ecuadorian rocotto virus (ERV), pepper severe mosaic virus (PepSMV), pepper yellow mosaic virus (PepYMV), and potato virus V (PVV) (PubMed:22242134, PubMed:26850324, PubMed:27655175). Plants lacking eIFiso4E, eIF4E1 and eIF4E2 exhibit a semi-dwarf phenotype (PubMed:22242134).</text>
</comment>
<comment type="miscellaneous">
    <text evidence="4">Displayed sequence is cv. Mospomorist and cv. M82, and confers susceptibility to potyviruses (e.g. potato virus Y (PVY) and tobacco etch virus (TEV)).</text>
</comment>
<comment type="similarity">
    <text evidence="13">Belongs to the eukaryotic initiation factor 4E family.</text>
</comment>
<proteinExistence type="evidence at protein level"/>